<accession>A0JVA0</accession>
<name>SEPF_ARTS2</name>
<keyword id="KW-0131">Cell cycle</keyword>
<keyword id="KW-0132">Cell division</keyword>
<keyword id="KW-0963">Cytoplasm</keyword>
<keyword id="KW-1185">Reference proteome</keyword>
<keyword id="KW-0717">Septation</keyword>
<comment type="function">
    <text evidence="1">Cell division protein that is part of the divisome complex and is recruited early to the Z-ring. Probably stimulates Z-ring formation, perhaps through the cross-linking of FtsZ protofilaments. Its function overlaps with FtsA.</text>
</comment>
<comment type="subunit">
    <text evidence="1">Homodimer. Interacts with FtsZ.</text>
</comment>
<comment type="subcellular location">
    <subcellularLocation>
        <location evidence="1">Cytoplasm</location>
    </subcellularLocation>
    <text evidence="1">Localizes to the division site, in a FtsZ-dependent manner.</text>
</comment>
<comment type="similarity">
    <text evidence="1">Belongs to the SepF family.</text>
</comment>
<feature type="chain" id="PRO_0000333973" description="Cell division protein SepF">
    <location>
        <begin position="1"/>
        <end position="178"/>
    </location>
</feature>
<feature type="region of interest" description="Disordered" evidence="2">
    <location>
        <begin position="19"/>
        <end position="65"/>
    </location>
</feature>
<feature type="compositionally biased region" description="Basic and acidic residues" evidence="2">
    <location>
        <begin position="19"/>
        <end position="45"/>
    </location>
</feature>
<dbReference type="EMBL" id="CP000454">
    <property type="protein sequence ID" value="ABK02970.1"/>
    <property type="molecule type" value="Genomic_DNA"/>
</dbReference>
<dbReference type="RefSeq" id="WP_011691436.1">
    <property type="nucleotide sequence ID" value="NC_008541.1"/>
</dbReference>
<dbReference type="SMR" id="A0JVA0"/>
<dbReference type="STRING" id="290399.Arth_1576"/>
<dbReference type="KEGG" id="art:Arth_1576"/>
<dbReference type="eggNOG" id="COG1799">
    <property type="taxonomic scope" value="Bacteria"/>
</dbReference>
<dbReference type="HOGENOM" id="CLU_078499_0_0_11"/>
<dbReference type="OrthoDB" id="3731101at2"/>
<dbReference type="Proteomes" id="UP000000754">
    <property type="component" value="Chromosome"/>
</dbReference>
<dbReference type="GO" id="GO:0005737">
    <property type="term" value="C:cytoplasm"/>
    <property type="evidence" value="ECO:0007669"/>
    <property type="project" value="UniProtKB-SubCell"/>
</dbReference>
<dbReference type="GO" id="GO:0000917">
    <property type="term" value="P:division septum assembly"/>
    <property type="evidence" value="ECO:0007669"/>
    <property type="project" value="UniProtKB-KW"/>
</dbReference>
<dbReference type="GO" id="GO:0043093">
    <property type="term" value="P:FtsZ-dependent cytokinesis"/>
    <property type="evidence" value="ECO:0007669"/>
    <property type="project" value="UniProtKB-UniRule"/>
</dbReference>
<dbReference type="Gene3D" id="3.30.110.150">
    <property type="entry name" value="SepF-like protein"/>
    <property type="match status" value="1"/>
</dbReference>
<dbReference type="HAMAP" id="MF_01197">
    <property type="entry name" value="SepF"/>
    <property type="match status" value="1"/>
</dbReference>
<dbReference type="InterPro" id="IPR023052">
    <property type="entry name" value="Cell_div_SepF"/>
</dbReference>
<dbReference type="InterPro" id="IPR007561">
    <property type="entry name" value="Cell_div_SepF/SepF-rel"/>
</dbReference>
<dbReference type="InterPro" id="IPR038594">
    <property type="entry name" value="SepF-like_sf"/>
</dbReference>
<dbReference type="PANTHER" id="PTHR35798">
    <property type="entry name" value="CELL DIVISION PROTEIN SEPF"/>
    <property type="match status" value="1"/>
</dbReference>
<dbReference type="PANTHER" id="PTHR35798:SF1">
    <property type="entry name" value="CELL DIVISION PROTEIN SEPF"/>
    <property type="match status" value="1"/>
</dbReference>
<dbReference type="Pfam" id="PF04472">
    <property type="entry name" value="SepF"/>
    <property type="match status" value="1"/>
</dbReference>
<sequence length="178" mass="19926">MAGALRKTMIYLGLADGDEHYESEHHTPHKDEDDSMEHDREERRAPAPVREIARETPTPHAAEEEYRAPVTPIKRAASSREETTGLRQITTIHPRSYNDAKLIGESFRDGIPVIMNVTDMGEADAKRLVDFSAGLVFGLRGSIERVTNKVFLLSPSYVEVIGDDKKVSETQASFFNQS</sequence>
<reference key="1">
    <citation type="journal article" date="2013" name="Stand. Genomic Sci.">
        <title>Complete genome sequence of Arthrobacter sp. strain FB24.</title>
        <authorList>
            <person name="Nakatsu C.H."/>
            <person name="Barabote R."/>
            <person name="Thompson S."/>
            <person name="Bruce D."/>
            <person name="Detter C."/>
            <person name="Brettin T."/>
            <person name="Han C."/>
            <person name="Beasley F."/>
            <person name="Chen W."/>
            <person name="Konopka A."/>
            <person name="Xie G."/>
        </authorList>
    </citation>
    <scope>NUCLEOTIDE SEQUENCE [LARGE SCALE GENOMIC DNA]</scope>
    <source>
        <strain>FB24</strain>
    </source>
</reference>
<gene>
    <name evidence="1" type="primary">sepF</name>
    <name type="ordered locus">Arth_1576</name>
</gene>
<organism>
    <name type="scientific">Arthrobacter sp. (strain FB24)</name>
    <dbReference type="NCBI Taxonomy" id="290399"/>
    <lineage>
        <taxon>Bacteria</taxon>
        <taxon>Bacillati</taxon>
        <taxon>Actinomycetota</taxon>
        <taxon>Actinomycetes</taxon>
        <taxon>Micrococcales</taxon>
        <taxon>Micrococcaceae</taxon>
        <taxon>Arthrobacter</taxon>
    </lineage>
</organism>
<proteinExistence type="inferred from homology"/>
<evidence type="ECO:0000255" key="1">
    <source>
        <dbReference type="HAMAP-Rule" id="MF_01197"/>
    </source>
</evidence>
<evidence type="ECO:0000256" key="2">
    <source>
        <dbReference type="SAM" id="MobiDB-lite"/>
    </source>
</evidence>
<protein>
    <recommendedName>
        <fullName evidence="1">Cell division protein SepF</fullName>
    </recommendedName>
</protein>